<organism>
    <name type="scientific">Bos taurus</name>
    <name type="common">Bovine</name>
    <dbReference type="NCBI Taxonomy" id="9913"/>
    <lineage>
        <taxon>Eukaryota</taxon>
        <taxon>Metazoa</taxon>
        <taxon>Chordata</taxon>
        <taxon>Craniata</taxon>
        <taxon>Vertebrata</taxon>
        <taxon>Euteleostomi</taxon>
        <taxon>Mammalia</taxon>
        <taxon>Eutheria</taxon>
        <taxon>Laurasiatheria</taxon>
        <taxon>Artiodactyla</taxon>
        <taxon>Ruminantia</taxon>
        <taxon>Pecora</taxon>
        <taxon>Bovidae</taxon>
        <taxon>Bovinae</taxon>
        <taxon>Bos</taxon>
    </lineage>
</organism>
<proteinExistence type="evidence at protein level"/>
<accession>P42026</accession>
<accession>Q2TBS6</accession>
<dbReference type="EC" id="7.1.1.2" evidence="1"/>
<dbReference type="EMBL" id="X65020">
    <property type="protein sequence ID" value="CAA46154.1"/>
    <property type="molecule type" value="mRNA"/>
</dbReference>
<dbReference type="EMBL" id="BC109716">
    <property type="protein sequence ID" value="AAI09717.1"/>
    <property type="molecule type" value="mRNA"/>
</dbReference>
<dbReference type="PIR" id="S22371">
    <property type="entry name" value="S22371"/>
</dbReference>
<dbReference type="RefSeq" id="NP_001033111.1">
    <property type="nucleotide sequence ID" value="NM_001038022.1"/>
</dbReference>
<dbReference type="RefSeq" id="XP_005209312.1">
    <property type="nucleotide sequence ID" value="XM_005209255.3"/>
</dbReference>
<dbReference type="RefSeq" id="XP_005209313.1">
    <property type="nucleotide sequence ID" value="XM_005209256.1"/>
</dbReference>
<dbReference type="PDB" id="5LC5">
    <property type="method" value="EM"/>
    <property type="resolution" value="4.35 A"/>
    <property type="chains" value="B=64-210"/>
</dbReference>
<dbReference type="PDB" id="5LDW">
    <property type="method" value="EM"/>
    <property type="resolution" value="4.27 A"/>
    <property type="chains" value="B=38-216"/>
</dbReference>
<dbReference type="PDB" id="5LDX">
    <property type="method" value="EM"/>
    <property type="resolution" value="5.60 A"/>
    <property type="chains" value="B=38-216"/>
</dbReference>
<dbReference type="PDB" id="5LNK">
    <property type="method" value="EM"/>
    <property type="resolution" value="3.90 A"/>
    <property type="chains" value="6=38-216"/>
</dbReference>
<dbReference type="PDB" id="5O31">
    <property type="method" value="EM"/>
    <property type="resolution" value="4.13 A"/>
    <property type="chains" value="B=38-216"/>
</dbReference>
<dbReference type="PDB" id="7DGQ">
    <property type="method" value="EM"/>
    <property type="resolution" value="5.00 A"/>
    <property type="chains" value="D=38-216"/>
</dbReference>
<dbReference type="PDB" id="7DGR">
    <property type="method" value="EM"/>
    <property type="resolution" value="4.60 A"/>
    <property type="chains" value="D=38-216"/>
</dbReference>
<dbReference type="PDB" id="7DGS">
    <property type="method" value="EM"/>
    <property type="resolution" value="7.80 A"/>
    <property type="chains" value="D=38-216"/>
</dbReference>
<dbReference type="PDB" id="7DGZ">
    <property type="method" value="EM"/>
    <property type="resolution" value="3.80 A"/>
    <property type="chains" value="D=38-216"/>
</dbReference>
<dbReference type="PDB" id="7DH0">
    <property type="method" value="EM"/>
    <property type="resolution" value="4.20 A"/>
    <property type="chains" value="D=38-216"/>
</dbReference>
<dbReference type="PDB" id="7DKF">
    <property type="method" value="EM"/>
    <property type="resolution" value="8.30 A"/>
    <property type="chains" value="D2=38-216"/>
</dbReference>
<dbReference type="PDB" id="7QSD">
    <property type="method" value="EM"/>
    <property type="resolution" value="3.10 A"/>
    <property type="chains" value="B=1-216"/>
</dbReference>
<dbReference type="PDB" id="7QSK">
    <property type="method" value="EM"/>
    <property type="resolution" value="2.84 A"/>
    <property type="chains" value="B=1-216"/>
</dbReference>
<dbReference type="PDB" id="7QSL">
    <property type="method" value="EM"/>
    <property type="resolution" value="2.76 A"/>
    <property type="chains" value="B=1-216"/>
</dbReference>
<dbReference type="PDB" id="7QSM">
    <property type="method" value="EM"/>
    <property type="resolution" value="2.30 A"/>
    <property type="chains" value="B=1-216"/>
</dbReference>
<dbReference type="PDB" id="7QSN">
    <property type="method" value="EM"/>
    <property type="resolution" value="2.81 A"/>
    <property type="chains" value="B=1-216"/>
</dbReference>
<dbReference type="PDB" id="7QSO">
    <property type="method" value="EM"/>
    <property type="resolution" value="3.02 A"/>
    <property type="chains" value="B=1-216"/>
</dbReference>
<dbReference type="PDB" id="7R41">
    <property type="method" value="EM"/>
    <property type="resolution" value="2.30 A"/>
    <property type="chains" value="B=1-216"/>
</dbReference>
<dbReference type="PDB" id="7R42">
    <property type="method" value="EM"/>
    <property type="resolution" value="2.30 A"/>
    <property type="chains" value="B=1-216"/>
</dbReference>
<dbReference type="PDB" id="7R43">
    <property type="method" value="EM"/>
    <property type="resolution" value="2.40 A"/>
    <property type="chains" value="B=1-216"/>
</dbReference>
<dbReference type="PDB" id="7R44">
    <property type="method" value="EM"/>
    <property type="resolution" value="2.40 A"/>
    <property type="chains" value="B=1-216"/>
</dbReference>
<dbReference type="PDB" id="7R45">
    <property type="method" value="EM"/>
    <property type="resolution" value="2.40 A"/>
    <property type="chains" value="B=1-216"/>
</dbReference>
<dbReference type="PDB" id="7R46">
    <property type="method" value="EM"/>
    <property type="resolution" value="2.40 A"/>
    <property type="chains" value="B=1-216"/>
</dbReference>
<dbReference type="PDB" id="7R47">
    <property type="method" value="EM"/>
    <property type="resolution" value="2.30 A"/>
    <property type="chains" value="B=1-216"/>
</dbReference>
<dbReference type="PDB" id="7R48">
    <property type="method" value="EM"/>
    <property type="resolution" value="2.30 A"/>
    <property type="chains" value="B=1-216"/>
</dbReference>
<dbReference type="PDB" id="7R4C">
    <property type="method" value="EM"/>
    <property type="resolution" value="2.30 A"/>
    <property type="chains" value="B=1-216"/>
</dbReference>
<dbReference type="PDB" id="7R4D">
    <property type="method" value="EM"/>
    <property type="resolution" value="2.30 A"/>
    <property type="chains" value="B=1-216"/>
</dbReference>
<dbReference type="PDB" id="7R4F">
    <property type="method" value="EM"/>
    <property type="resolution" value="2.40 A"/>
    <property type="chains" value="B=1-216"/>
</dbReference>
<dbReference type="PDB" id="7R4G">
    <property type="method" value="EM"/>
    <property type="resolution" value="2.50 A"/>
    <property type="chains" value="B=1-216"/>
</dbReference>
<dbReference type="PDB" id="8Q0A">
    <property type="method" value="EM"/>
    <property type="resolution" value="3.10 A"/>
    <property type="chains" value="B=1-216"/>
</dbReference>
<dbReference type="PDB" id="8Q0F">
    <property type="method" value="EM"/>
    <property type="resolution" value="3.10 A"/>
    <property type="chains" value="B=1-216"/>
</dbReference>
<dbReference type="PDB" id="8Q0J">
    <property type="method" value="EM"/>
    <property type="resolution" value="3.80 A"/>
    <property type="chains" value="B=1-216"/>
</dbReference>
<dbReference type="PDB" id="8Q0M">
    <property type="method" value="EM"/>
    <property type="resolution" value="3.10 A"/>
    <property type="chains" value="B=1-216"/>
</dbReference>
<dbReference type="PDB" id="8Q0O">
    <property type="method" value="EM"/>
    <property type="resolution" value="3.10 A"/>
    <property type="chains" value="B=1-216"/>
</dbReference>
<dbReference type="PDB" id="8Q0Q">
    <property type="method" value="EM"/>
    <property type="resolution" value="3.60 A"/>
    <property type="chains" value="B=1-216"/>
</dbReference>
<dbReference type="PDB" id="8Q1P">
    <property type="method" value="EM"/>
    <property type="resolution" value="2.90 A"/>
    <property type="chains" value="B=1-216"/>
</dbReference>
<dbReference type="PDB" id="8Q1U">
    <property type="method" value="EM"/>
    <property type="resolution" value="3.30 A"/>
    <property type="chains" value="B=1-216"/>
</dbReference>
<dbReference type="PDB" id="8Q1Y">
    <property type="method" value="EM"/>
    <property type="resolution" value="2.60 A"/>
    <property type="chains" value="B=1-216"/>
</dbReference>
<dbReference type="PDB" id="8Q25">
    <property type="method" value="EM"/>
    <property type="resolution" value="2.80 A"/>
    <property type="chains" value="B=1-216"/>
</dbReference>
<dbReference type="PDB" id="8Q45">
    <property type="method" value="EM"/>
    <property type="resolution" value="2.70 A"/>
    <property type="chains" value="B=1-216"/>
</dbReference>
<dbReference type="PDB" id="8Q46">
    <property type="method" value="EM"/>
    <property type="resolution" value="2.60 A"/>
    <property type="chains" value="B=1-216"/>
</dbReference>
<dbReference type="PDB" id="8Q47">
    <property type="method" value="EM"/>
    <property type="resolution" value="2.90 A"/>
    <property type="chains" value="B=1-216"/>
</dbReference>
<dbReference type="PDB" id="8Q48">
    <property type="method" value="EM"/>
    <property type="resolution" value="2.50 A"/>
    <property type="chains" value="B=1-216"/>
</dbReference>
<dbReference type="PDB" id="8Q49">
    <property type="method" value="EM"/>
    <property type="resolution" value="2.60 A"/>
    <property type="chains" value="B=1-216"/>
</dbReference>
<dbReference type="PDB" id="8Q4A">
    <property type="method" value="EM"/>
    <property type="resolution" value="2.60 A"/>
    <property type="chains" value="B=1-216"/>
</dbReference>
<dbReference type="PDBsum" id="5LC5"/>
<dbReference type="PDBsum" id="5LDW"/>
<dbReference type="PDBsum" id="5LDX"/>
<dbReference type="PDBsum" id="5LNK"/>
<dbReference type="PDBsum" id="5O31"/>
<dbReference type="PDBsum" id="7DGQ"/>
<dbReference type="PDBsum" id="7DGR"/>
<dbReference type="PDBsum" id="7DGS"/>
<dbReference type="PDBsum" id="7DGZ"/>
<dbReference type="PDBsum" id="7DH0"/>
<dbReference type="PDBsum" id="7DKF"/>
<dbReference type="PDBsum" id="7QSD"/>
<dbReference type="PDBsum" id="7QSK"/>
<dbReference type="PDBsum" id="7QSL"/>
<dbReference type="PDBsum" id="7QSM"/>
<dbReference type="PDBsum" id="7QSN"/>
<dbReference type="PDBsum" id="7QSO"/>
<dbReference type="PDBsum" id="7R41"/>
<dbReference type="PDBsum" id="7R42"/>
<dbReference type="PDBsum" id="7R43"/>
<dbReference type="PDBsum" id="7R44"/>
<dbReference type="PDBsum" id="7R45"/>
<dbReference type="PDBsum" id="7R46"/>
<dbReference type="PDBsum" id="7R47"/>
<dbReference type="PDBsum" id="7R48"/>
<dbReference type="PDBsum" id="7R4C"/>
<dbReference type="PDBsum" id="7R4D"/>
<dbReference type="PDBsum" id="7R4F"/>
<dbReference type="PDBsum" id="7R4G"/>
<dbReference type="PDBsum" id="8Q0A"/>
<dbReference type="PDBsum" id="8Q0F"/>
<dbReference type="PDBsum" id="8Q0J"/>
<dbReference type="PDBsum" id="8Q0M"/>
<dbReference type="PDBsum" id="8Q0O"/>
<dbReference type="PDBsum" id="8Q0Q"/>
<dbReference type="PDBsum" id="8Q1P"/>
<dbReference type="PDBsum" id="8Q1U"/>
<dbReference type="PDBsum" id="8Q1Y"/>
<dbReference type="PDBsum" id="8Q25"/>
<dbReference type="PDBsum" id="8Q45"/>
<dbReference type="PDBsum" id="8Q46"/>
<dbReference type="PDBsum" id="8Q47"/>
<dbReference type="PDBsum" id="8Q48"/>
<dbReference type="PDBsum" id="8Q49"/>
<dbReference type="PDBsum" id="8Q4A"/>
<dbReference type="EMDB" id="EMD-18051"/>
<dbReference type="EMDB" id="EMD-18052"/>
<dbReference type="EMDB" id="EMD-18054"/>
<dbReference type="EMDB" id="EMD-18055"/>
<dbReference type="EMDB" id="EMD-18057"/>
<dbReference type="EMDB" id="EMD-18059"/>
<dbReference type="EMDB" id="EMD-18066"/>
<dbReference type="EMDB" id="EMD-18067"/>
<dbReference type="EMDB" id="EMD-18068"/>
<dbReference type="EMDB" id="EMD-18069"/>
<dbReference type="EMDB" id="EMD-18138"/>
<dbReference type="EMDB" id="EMD-18139"/>
<dbReference type="EMDB" id="EMD-18140"/>
<dbReference type="EMDB" id="EMD-18141"/>
<dbReference type="EMDB" id="EMD-18142"/>
<dbReference type="EMDB" id="EMD-18143"/>
<dbReference type="EMDB" id="EMD-30673"/>
<dbReference type="EMDB" id="EMD-30676"/>
<dbReference type="EMDB" id="EMD-3731"/>
<dbReference type="EMDB" id="EMD-4032"/>
<dbReference type="EMDB" id="EMD-4040"/>
<dbReference type="EMDB" id="EMD-4041"/>
<dbReference type="EMDB" id="EMD-4093"/>
<dbReference type="SMR" id="P42026"/>
<dbReference type="CORUM" id="P42026"/>
<dbReference type="DIP" id="DIP-38820N"/>
<dbReference type="FunCoup" id="P42026">
    <property type="interactions" value="1794"/>
</dbReference>
<dbReference type="IntAct" id="P42026">
    <property type="interactions" value="2"/>
</dbReference>
<dbReference type="STRING" id="9913.ENSBTAP00000051744"/>
<dbReference type="TCDB" id="3.D.1.6.1">
    <property type="family name" value="the h+ or na+-translocating nadh dehydrogenase (ndh) family"/>
</dbReference>
<dbReference type="GlyGen" id="P42026">
    <property type="glycosylation" value="1 site, 1 O-linked glycan (1 site)"/>
</dbReference>
<dbReference type="PaxDb" id="9913-ENSBTAP00000025870"/>
<dbReference type="PeptideAtlas" id="P42026"/>
<dbReference type="GeneID" id="338079"/>
<dbReference type="KEGG" id="bta:338079"/>
<dbReference type="CTD" id="374291"/>
<dbReference type="VEuPathDB" id="HostDB:ENSBTAG00000019419"/>
<dbReference type="eggNOG" id="KOG1687">
    <property type="taxonomic scope" value="Eukaryota"/>
</dbReference>
<dbReference type="HOGENOM" id="CLU_055737_1_2_1"/>
<dbReference type="InParanoid" id="P42026"/>
<dbReference type="OMA" id="GCGGIEM"/>
<dbReference type="OrthoDB" id="268400at2759"/>
<dbReference type="TreeFam" id="TF312859"/>
<dbReference type="Reactome" id="R-BTA-611105">
    <property type="pathway name" value="Respiratory electron transport"/>
</dbReference>
<dbReference type="Reactome" id="R-BTA-6799198">
    <property type="pathway name" value="Complex I biogenesis"/>
</dbReference>
<dbReference type="Proteomes" id="UP000009136">
    <property type="component" value="Chromosome 7"/>
</dbReference>
<dbReference type="Bgee" id="ENSBTAG00000019419">
    <property type="expression patterns" value="Expressed in laryngeal cartilage and 108 other cell types or tissues"/>
</dbReference>
<dbReference type="GO" id="GO:0005743">
    <property type="term" value="C:mitochondrial inner membrane"/>
    <property type="evidence" value="ECO:0000314"/>
    <property type="project" value="UniProtKB"/>
</dbReference>
<dbReference type="GO" id="GO:0045271">
    <property type="term" value="C:respiratory chain complex I"/>
    <property type="evidence" value="ECO:0000314"/>
    <property type="project" value="UniProtKB"/>
</dbReference>
<dbReference type="GO" id="GO:0051539">
    <property type="term" value="F:4 iron, 4 sulfur cluster binding"/>
    <property type="evidence" value="ECO:0007669"/>
    <property type="project" value="UniProtKB-KW"/>
</dbReference>
<dbReference type="GO" id="GO:0046872">
    <property type="term" value="F:metal ion binding"/>
    <property type="evidence" value="ECO:0007669"/>
    <property type="project" value="UniProtKB-KW"/>
</dbReference>
<dbReference type="GO" id="GO:0008137">
    <property type="term" value="F:NADH dehydrogenase (ubiquinone) activity"/>
    <property type="evidence" value="ECO:0000250"/>
    <property type="project" value="UniProtKB"/>
</dbReference>
<dbReference type="GO" id="GO:0048038">
    <property type="term" value="F:quinone binding"/>
    <property type="evidence" value="ECO:0007669"/>
    <property type="project" value="InterPro"/>
</dbReference>
<dbReference type="GO" id="GO:0009060">
    <property type="term" value="P:aerobic respiration"/>
    <property type="evidence" value="ECO:0000318"/>
    <property type="project" value="GO_Central"/>
</dbReference>
<dbReference type="GO" id="GO:0015990">
    <property type="term" value="P:electron transport coupled proton transport"/>
    <property type="evidence" value="ECO:0000318"/>
    <property type="project" value="GO_Central"/>
</dbReference>
<dbReference type="GO" id="GO:0006120">
    <property type="term" value="P:mitochondrial electron transport, NADH to ubiquinone"/>
    <property type="evidence" value="ECO:0000250"/>
    <property type="project" value="UniProtKB"/>
</dbReference>
<dbReference type="GO" id="GO:0032981">
    <property type="term" value="P:mitochondrial respiratory chain complex I assembly"/>
    <property type="evidence" value="ECO:0000250"/>
    <property type="project" value="UniProtKB"/>
</dbReference>
<dbReference type="FunFam" id="3.40.50.12280:FF:000001">
    <property type="entry name" value="NADH-quinone oxidoreductase subunit B 2"/>
    <property type="match status" value="1"/>
</dbReference>
<dbReference type="Gene3D" id="3.40.50.12280">
    <property type="match status" value="1"/>
</dbReference>
<dbReference type="HAMAP" id="MF_01356">
    <property type="entry name" value="NDH1_NuoB"/>
    <property type="match status" value="1"/>
</dbReference>
<dbReference type="InterPro" id="IPR006137">
    <property type="entry name" value="NADH_UbQ_OxRdtase-like_20kDa"/>
</dbReference>
<dbReference type="InterPro" id="IPR006138">
    <property type="entry name" value="NADH_UQ_OxRdtase_20Kd_su"/>
</dbReference>
<dbReference type="NCBIfam" id="TIGR01957">
    <property type="entry name" value="nuoB_fam"/>
    <property type="match status" value="1"/>
</dbReference>
<dbReference type="NCBIfam" id="NF005012">
    <property type="entry name" value="PRK06411.1"/>
    <property type="match status" value="1"/>
</dbReference>
<dbReference type="PANTHER" id="PTHR11995">
    <property type="entry name" value="NADH DEHYDROGENASE"/>
    <property type="match status" value="1"/>
</dbReference>
<dbReference type="PANTHER" id="PTHR11995:SF14">
    <property type="entry name" value="NADH DEHYDROGENASE [UBIQUINONE] IRON-SULFUR PROTEIN 7, MITOCHONDRIAL"/>
    <property type="match status" value="1"/>
</dbReference>
<dbReference type="Pfam" id="PF01058">
    <property type="entry name" value="Oxidored_q6"/>
    <property type="match status" value="1"/>
</dbReference>
<dbReference type="SUPFAM" id="SSF56770">
    <property type="entry name" value="HydA/Nqo6-like"/>
    <property type="match status" value="1"/>
</dbReference>
<dbReference type="PROSITE" id="PS01150">
    <property type="entry name" value="COMPLEX1_20K"/>
    <property type="match status" value="1"/>
</dbReference>
<keyword id="KW-0002">3D-structure</keyword>
<keyword id="KW-0004">4Fe-4S</keyword>
<keyword id="KW-0903">Direct protein sequencing</keyword>
<keyword id="KW-0249">Electron transport</keyword>
<keyword id="KW-0379">Hydroxylation</keyword>
<keyword id="KW-0408">Iron</keyword>
<keyword id="KW-0411">Iron-sulfur</keyword>
<keyword id="KW-0472">Membrane</keyword>
<keyword id="KW-0479">Metal-binding</keyword>
<keyword id="KW-0496">Mitochondrion</keyword>
<keyword id="KW-0999">Mitochondrion inner membrane</keyword>
<keyword id="KW-0520">NAD</keyword>
<keyword id="KW-0560">Oxidoreductase</keyword>
<keyword id="KW-1185">Reference proteome</keyword>
<keyword id="KW-0679">Respiratory chain</keyword>
<keyword id="KW-0809">Transit peptide</keyword>
<keyword id="KW-1278">Translocase</keyword>
<keyword id="KW-0813">Transport</keyword>
<keyword id="KW-0830">Ubiquinone</keyword>
<evidence type="ECO:0000250" key="1">
    <source>
        <dbReference type="UniProtKB" id="O75251"/>
    </source>
</evidence>
<evidence type="ECO:0000255" key="2"/>
<evidence type="ECO:0000269" key="3">
    <source>
    </source>
</evidence>
<evidence type="ECO:0000269" key="4">
    <source>
    </source>
</evidence>
<evidence type="ECO:0000269" key="5">
    <source>
    </source>
</evidence>
<evidence type="ECO:0000269" key="6">
    <source>
    </source>
</evidence>
<evidence type="ECO:0000269" key="7">
    <source>
    </source>
</evidence>
<evidence type="ECO:0000305" key="8"/>
<evidence type="ECO:0000305" key="9">
    <source>
    </source>
</evidence>
<evidence type="ECO:0007829" key="10">
    <source>
        <dbReference type="PDB" id="7QSD"/>
    </source>
</evidence>
<evidence type="ECO:0007829" key="11">
    <source>
        <dbReference type="PDB" id="7QSM"/>
    </source>
</evidence>
<evidence type="ECO:0007829" key="12">
    <source>
        <dbReference type="PDB" id="8Q47"/>
    </source>
</evidence>
<sequence>MAALAALRLLHPILAVRSGVGAALQVRGVHSSMAADSPSSTQPAVSQARAVVPKPAALPSSRGEYVVAKLDDLINWARRSSLWPMTFGLACCAVEMMHMAAPRYDMDRFGVVFRASPRQSDVMIVAGTLTNKMAPALRKVYDQMPEPRYVVSMGSCANGGGYYHYSYSVVRGCDRIVPVDIYVPGCPPTAEALLYGILQLQKKIKREKRLRIWYRR</sequence>
<comment type="function">
    <text evidence="1 3 5">Core subunit of the mitochondrial membrane respiratory chain NADH dehydrogenase (Complex I) which catalyzes electron transfer from NADH through the respiratory chain, using ubiquinone as an electron acceptor (PubMed:10852722, PubMed:18721790). Essential for the catalytic activity of complex I (By similarity).</text>
</comment>
<comment type="catalytic activity">
    <reaction evidence="1">
        <text>a ubiquinone + NADH + 5 H(+)(in) = a ubiquinol + NAD(+) + 4 H(+)(out)</text>
        <dbReference type="Rhea" id="RHEA:29091"/>
        <dbReference type="Rhea" id="RHEA-COMP:9565"/>
        <dbReference type="Rhea" id="RHEA-COMP:9566"/>
        <dbReference type="ChEBI" id="CHEBI:15378"/>
        <dbReference type="ChEBI" id="CHEBI:16389"/>
        <dbReference type="ChEBI" id="CHEBI:17976"/>
        <dbReference type="ChEBI" id="CHEBI:57540"/>
        <dbReference type="ChEBI" id="CHEBI:57945"/>
        <dbReference type="EC" id="7.1.1.2"/>
    </reaction>
</comment>
<comment type="cofactor">
    <cofactor evidence="8">
        <name>[4Fe-4S] cluster</name>
        <dbReference type="ChEBI" id="CHEBI:49883"/>
    </cofactor>
    <text evidence="8">Binds 1 [4Fe-4S] cluster.</text>
</comment>
<comment type="subunit">
    <text evidence="3 5 7">Core subunit of respiratory chain NADH dehydrogenase (Complex I) which is composed of 45 different subunits (PubMed:10852722, PubMed:18721790, PubMed:25209663). This is a component of the iron-sulfur (IP) fragment of the enzyme (PubMed:25209663).</text>
</comment>
<comment type="subcellular location">
    <subcellularLocation>
        <location evidence="3 5 7">Mitochondrion inner membrane</location>
        <topology evidence="9">Peripheral membrane protein</topology>
        <orientation evidence="9">Matrix side</orientation>
    </subcellularLocation>
</comment>
<comment type="PTM">
    <text evidence="1">Hydroxylated ar Arg-114 by NDUFAF5 early in the pathway of assembly of complex I, before the formation of the juncture between peripheral and membrane arms.</text>
</comment>
<comment type="similarity">
    <text evidence="8">Belongs to the complex I 20 kDa subunit family.</text>
</comment>
<gene>
    <name type="primary">NDUFS7</name>
</gene>
<protein>
    <recommendedName>
        <fullName>NADH dehydrogenase [ubiquinone] iron-sulfur protein 7, mitochondrial</fullName>
        <ecNumber evidence="1">7.1.1.2</ecNumber>
    </recommendedName>
    <alternativeName>
        <fullName>Complex I-20kD</fullName>
        <shortName>CI-20kD</shortName>
    </alternativeName>
    <alternativeName>
        <fullName>NADH-ubiquinone oxidoreductase 20 kDa subunit</fullName>
    </alternativeName>
    <alternativeName>
        <fullName>PSST subunit</fullName>
    </alternativeName>
</protein>
<name>NDUS7_BOVIN</name>
<reference key="1">
    <citation type="journal article" date="1992" name="FEBS Lett.">
        <title>NADH: ubiquinone oxidoreductase from bovine heart mitochondria. A fourth nuclear encoded subunit with a homologue encoded in chloroplast genomes.</title>
        <authorList>
            <person name="Arizmendi J.M."/>
            <person name="Runswick M.J."/>
            <person name="Skehel J.M."/>
            <person name="Walker J.E."/>
        </authorList>
    </citation>
    <scope>NUCLEOTIDE SEQUENCE [MRNA]</scope>
    <scope>PARTIAL PROTEIN SEQUENCE</scope>
    <scope>PROTEIN SEQUENCE OF N-TERMINUS</scope>
    <source>
        <tissue>Heart</tissue>
    </source>
</reference>
<reference key="2">
    <citation type="submission" date="2005-11" db="EMBL/GenBank/DDBJ databases">
        <authorList>
            <consortium name="NIH - Mammalian Gene Collection (MGC) project"/>
        </authorList>
    </citation>
    <scope>NUCLEOTIDE SEQUENCE [LARGE SCALE MRNA]</scope>
    <source>
        <strain>Crossbred X Angus</strain>
        <tissue>Liver</tissue>
    </source>
</reference>
<reference key="3">
    <citation type="journal article" date="2013" name="J. Biol. Chem.">
        <title>Post-translational modifications near the quinone binding site of mammalian complex I.</title>
        <authorList>
            <person name="Carroll J."/>
            <person name="Ding S."/>
            <person name="Fearnley I.M."/>
            <person name="Walker J.E."/>
        </authorList>
    </citation>
    <scope>PROTEIN SEQUENCE OF 107-120</scope>
    <scope>HYDROXYLATION AT ARG-114</scope>
</reference>
<reference key="4">
    <citation type="journal article" date="2000" name="Biochemistry">
        <title>Resolution of the membrane domain of bovine complex I into subcomplexes: implications for the structural organization of the enzyme.</title>
        <authorList>
            <person name="Sazanov L.A."/>
            <person name="Peak-Chew S.Y."/>
            <person name="Fearnley I.M."/>
            <person name="Walker J.E."/>
        </authorList>
    </citation>
    <scope>PARTIAL PROTEIN SEQUENCE</scope>
    <scope>SUBUNIT</scope>
    <scope>IDENTIFICATION IN COMPLEX I</scope>
    <scope>SUBCELLULAR LOCATION</scope>
    <scope>FUNCTION</scope>
</reference>
<reference key="5">
    <citation type="journal article" date="2008" name="Anal. Biochem.">
        <title>Subunit analysis of bovine heart complex I by reversed-phase high-performance liquid chromatography, electrospray ionization-tandem mass spectrometry, and matrix-assisted laser desorption/ionization-time-of-flight mass spectrometry.</title>
        <authorList>
            <person name="Lemma-Gray P."/>
            <person name="Valusova E."/>
            <person name="Carroll C.A."/>
            <person name="Weintraub S.T."/>
            <person name="Musatov A."/>
            <person name="Robinson N.C."/>
        </authorList>
    </citation>
    <scope>SUBUNIT</scope>
    <scope>IDENTIFICATION IN COMPLEX I</scope>
    <scope>SUBCELLULAR LOCATION</scope>
    <scope>FUNCTION</scope>
</reference>
<reference key="6">
    <citation type="journal article" date="2014" name="Nature">
        <title>Architecture of mammalian respiratory complex I.</title>
        <authorList>
            <person name="Vinothkumar K.R."/>
            <person name="Zhu J."/>
            <person name="Hirst J."/>
        </authorList>
    </citation>
    <scope>SUBUNIT</scope>
    <scope>SUBCELLULAR LOCATION</scope>
    <scope>TOPOLOGY</scope>
</reference>
<feature type="transit peptide" description="Mitochondrion" evidence="4">
    <location>
        <begin position="1"/>
        <end position="37"/>
    </location>
</feature>
<feature type="chain" id="PRO_0000020026" description="NADH dehydrogenase [ubiquinone] iron-sulfur protein 7, mitochondrial">
    <location>
        <begin position="38"/>
        <end position="216"/>
    </location>
</feature>
<feature type="binding site" evidence="2">
    <location>
        <position position="91"/>
    </location>
    <ligand>
        <name>[4Fe-4S] cluster</name>
        <dbReference type="ChEBI" id="CHEBI:49883"/>
    </ligand>
</feature>
<feature type="binding site" evidence="2">
    <location>
        <position position="92"/>
    </location>
    <ligand>
        <name>[4Fe-4S] cluster</name>
        <dbReference type="ChEBI" id="CHEBI:49883"/>
    </ligand>
</feature>
<feature type="binding site" evidence="2">
    <location>
        <position position="156"/>
    </location>
    <ligand>
        <name>[4Fe-4S] cluster</name>
        <dbReference type="ChEBI" id="CHEBI:49883"/>
    </ligand>
</feature>
<feature type="binding site" evidence="2">
    <location>
        <position position="186"/>
    </location>
    <ligand>
        <name>[4Fe-4S] cluster</name>
        <dbReference type="ChEBI" id="CHEBI:49883"/>
    </ligand>
</feature>
<feature type="modified residue" description="Hydroxyarginine" evidence="6">
    <location>
        <position position="114"/>
    </location>
</feature>
<feature type="helix" evidence="11">
    <location>
        <begin position="63"/>
        <end position="80"/>
    </location>
</feature>
<feature type="strand" evidence="11">
    <location>
        <begin position="84"/>
        <end position="88"/>
    </location>
</feature>
<feature type="helix" evidence="11">
    <location>
        <begin position="92"/>
        <end position="100"/>
    </location>
</feature>
<feature type="turn" evidence="11">
    <location>
        <begin position="102"/>
        <end position="104"/>
    </location>
</feature>
<feature type="helix" evidence="11">
    <location>
        <begin position="106"/>
        <end position="109"/>
    </location>
</feature>
<feature type="strand" evidence="10">
    <location>
        <begin position="114"/>
        <end position="116"/>
    </location>
</feature>
<feature type="turn" evidence="11">
    <location>
        <begin position="117"/>
        <end position="119"/>
    </location>
</feature>
<feature type="strand" evidence="11">
    <location>
        <begin position="121"/>
        <end position="127"/>
    </location>
</feature>
<feature type="helix" evidence="11">
    <location>
        <begin position="131"/>
        <end position="133"/>
    </location>
</feature>
<feature type="helix" evidence="11">
    <location>
        <begin position="134"/>
        <end position="143"/>
    </location>
</feature>
<feature type="strand" evidence="11">
    <location>
        <begin position="149"/>
        <end position="153"/>
    </location>
</feature>
<feature type="helix" evidence="11">
    <location>
        <begin position="154"/>
        <end position="159"/>
    </location>
</feature>
<feature type="helix" evidence="11">
    <location>
        <begin position="161"/>
        <end position="163"/>
    </location>
</feature>
<feature type="strand" evidence="12">
    <location>
        <begin position="167"/>
        <end position="169"/>
    </location>
</feature>
<feature type="helix" evidence="11">
    <location>
        <begin position="173"/>
        <end position="175"/>
    </location>
</feature>
<feature type="strand" evidence="11">
    <location>
        <begin position="180"/>
        <end position="183"/>
    </location>
</feature>
<feature type="strand" evidence="11">
    <location>
        <begin position="185"/>
        <end position="187"/>
    </location>
</feature>
<feature type="helix" evidence="11">
    <location>
        <begin position="190"/>
        <end position="205"/>
    </location>
</feature>
<feature type="helix" evidence="11">
    <location>
        <begin position="209"/>
        <end position="214"/>
    </location>
</feature>